<organism>
    <name type="scientific">Oenococcus oeni (strain ATCC BAA-331 / PSU-1)</name>
    <dbReference type="NCBI Taxonomy" id="203123"/>
    <lineage>
        <taxon>Bacteria</taxon>
        <taxon>Bacillati</taxon>
        <taxon>Bacillota</taxon>
        <taxon>Bacilli</taxon>
        <taxon>Lactobacillales</taxon>
        <taxon>Lactobacillaceae</taxon>
        <taxon>Oenococcus</taxon>
    </lineage>
</organism>
<comment type="function">
    <text evidence="1">Binds directly to 16S ribosomal RNA.</text>
</comment>
<comment type="similarity">
    <text evidence="1">Belongs to the bacterial ribosomal protein bS20 family.</text>
</comment>
<gene>
    <name evidence="1" type="primary">rpsT</name>
    <name type="ordered locus">OEOE_1284</name>
</gene>
<proteinExistence type="inferred from homology"/>
<dbReference type="EMBL" id="CP000411">
    <property type="protein sequence ID" value="ABJ57157.1"/>
    <property type="molecule type" value="Genomic_DNA"/>
</dbReference>
<dbReference type="RefSeq" id="WP_002819151.1">
    <property type="nucleotide sequence ID" value="NC_008528.1"/>
</dbReference>
<dbReference type="SMR" id="Q04EG5"/>
<dbReference type="STRING" id="203123.OEOE_1284"/>
<dbReference type="GeneID" id="75065613"/>
<dbReference type="KEGG" id="ooe:OEOE_1284"/>
<dbReference type="eggNOG" id="COG0268">
    <property type="taxonomic scope" value="Bacteria"/>
</dbReference>
<dbReference type="HOGENOM" id="CLU_160655_1_1_9"/>
<dbReference type="Proteomes" id="UP000000774">
    <property type="component" value="Chromosome"/>
</dbReference>
<dbReference type="GO" id="GO:1990904">
    <property type="term" value="C:ribonucleoprotein complex"/>
    <property type="evidence" value="ECO:0007669"/>
    <property type="project" value="UniProtKB-KW"/>
</dbReference>
<dbReference type="GO" id="GO:0005840">
    <property type="term" value="C:ribosome"/>
    <property type="evidence" value="ECO:0007669"/>
    <property type="project" value="UniProtKB-KW"/>
</dbReference>
<dbReference type="GO" id="GO:0019843">
    <property type="term" value="F:rRNA binding"/>
    <property type="evidence" value="ECO:0007669"/>
    <property type="project" value="UniProtKB-UniRule"/>
</dbReference>
<dbReference type="GO" id="GO:0003735">
    <property type="term" value="F:structural constituent of ribosome"/>
    <property type="evidence" value="ECO:0007669"/>
    <property type="project" value="InterPro"/>
</dbReference>
<dbReference type="GO" id="GO:0006412">
    <property type="term" value="P:translation"/>
    <property type="evidence" value="ECO:0007669"/>
    <property type="project" value="UniProtKB-UniRule"/>
</dbReference>
<dbReference type="Gene3D" id="1.20.58.110">
    <property type="entry name" value="Ribosomal protein S20"/>
    <property type="match status" value="1"/>
</dbReference>
<dbReference type="HAMAP" id="MF_00500">
    <property type="entry name" value="Ribosomal_bS20"/>
    <property type="match status" value="1"/>
</dbReference>
<dbReference type="InterPro" id="IPR002583">
    <property type="entry name" value="Ribosomal_bS20"/>
</dbReference>
<dbReference type="InterPro" id="IPR036510">
    <property type="entry name" value="Ribosomal_bS20_sf"/>
</dbReference>
<dbReference type="NCBIfam" id="TIGR00029">
    <property type="entry name" value="S20"/>
    <property type="match status" value="1"/>
</dbReference>
<dbReference type="Pfam" id="PF01649">
    <property type="entry name" value="Ribosomal_S20p"/>
    <property type="match status" value="1"/>
</dbReference>
<dbReference type="SUPFAM" id="SSF46992">
    <property type="entry name" value="Ribosomal protein S20"/>
    <property type="match status" value="1"/>
</dbReference>
<reference key="1">
    <citation type="journal article" date="2006" name="Proc. Natl. Acad. Sci. U.S.A.">
        <title>Comparative genomics of the lactic acid bacteria.</title>
        <authorList>
            <person name="Makarova K.S."/>
            <person name="Slesarev A."/>
            <person name="Wolf Y.I."/>
            <person name="Sorokin A."/>
            <person name="Mirkin B."/>
            <person name="Koonin E.V."/>
            <person name="Pavlov A."/>
            <person name="Pavlova N."/>
            <person name="Karamychev V."/>
            <person name="Polouchine N."/>
            <person name="Shakhova V."/>
            <person name="Grigoriev I."/>
            <person name="Lou Y."/>
            <person name="Rohksar D."/>
            <person name="Lucas S."/>
            <person name="Huang K."/>
            <person name="Goodstein D.M."/>
            <person name="Hawkins T."/>
            <person name="Plengvidhya V."/>
            <person name="Welker D."/>
            <person name="Hughes J."/>
            <person name="Goh Y."/>
            <person name="Benson A."/>
            <person name="Baldwin K."/>
            <person name="Lee J.-H."/>
            <person name="Diaz-Muniz I."/>
            <person name="Dosti B."/>
            <person name="Smeianov V."/>
            <person name="Wechter W."/>
            <person name="Barabote R."/>
            <person name="Lorca G."/>
            <person name="Altermann E."/>
            <person name="Barrangou R."/>
            <person name="Ganesan B."/>
            <person name="Xie Y."/>
            <person name="Rawsthorne H."/>
            <person name="Tamir D."/>
            <person name="Parker C."/>
            <person name="Breidt F."/>
            <person name="Broadbent J.R."/>
            <person name="Hutkins R."/>
            <person name="O'Sullivan D."/>
            <person name="Steele J."/>
            <person name="Unlu G."/>
            <person name="Saier M.H. Jr."/>
            <person name="Klaenhammer T."/>
            <person name="Richardson P."/>
            <person name="Kozyavkin S."/>
            <person name="Weimer B.C."/>
            <person name="Mills D.A."/>
        </authorList>
    </citation>
    <scope>NUCLEOTIDE SEQUENCE [LARGE SCALE GENOMIC DNA]</scope>
    <source>
        <strain>ATCC BAA-331 / PSU-1</strain>
    </source>
</reference>
<keyword id="KW-1185">Reference proteome</keyword>
<keyword id="KW-0687">Ribonucleoprotein</keyword>
<keyword id="KW-0689">Ribosomal protein</keyword>
<keyword id="KW-0694">RNA-binding</keyword>
<keyword id="KW-0699">rRNA-binding</keyword>
<evidence type="ECO:0000255" key="1">
    <source>
        <dbReference type="HAMAP-Rule" id="MF_00500"/>
    </source>
</evidence>
<evidence type="ECO:0000305" key="2"/>
<feature type="chain" id="PRO_1000126485" description="Small ribosomal subunit protein bS20">
    <location>
        <begin position="1"/>
        <end position="88"/>
    </location>
</feature>
<protein>
    <recommendedName>
        <fullName evidence="1">Small ribosomal subunit protein bS20</fullName>
    </recommendedName>
    <alternativeName>
        <fullName evidence="2">30S ribosomal protein S20</fullName>
    </alternativeName>
</protein>
<sequence>MPIIESSIQRERLNKAERAVRAPQISAYRTAVKNFEKAAAAGADNLQELFSKTSAAIDKAETKNLIKKNKAARDKARLYKLLKAATSK</sequence>
<name>RS20_OENOB</name>
<accession>Q04EG5</accession>